<dbReference type="EC" id="4.1.1.39"/>
<dbReference type="EMBL" id="M77032">
    <property type="protein sequence ID" value="AAA84499.1"/>
    <property type="molecule type" value="Genomic_DNA"/>
</dbReference>
<dbReference type="SMR" id="Q05800"/>
<dbReference type="GO" id="GO:0009507">
    <property type="term" value="C:chloroplast"/>
    <property type="evidence" value="ECO:0007669"/>
    <property type="project" value="UniProtKB-SubCell"/>
</dbReference>
<dbReference type="GO" id="GO:0000287">
    <property type="term" value="F:magnesium ion binding"/>
    <property type="evidence" value="ECO:0007669"/>
    <property type="project" value="InterPro"/>
</dbReference>
<dbReference type="GO" id="GO:0004497">
    <property type="term" value="F:monooxygenase activity"/>
    <property type="evidence" value="ECO:0007669"/>
    <property type="project" value="UniProtKB-KW"/>
</dbReference>
<dbReference type="GO" id="GO:0016984">
    <property type="term" value="F:ribulose-bisphosphate carboxylase activity"/>
    <property type="evidence" value="ECO:0007669"/>
    <property type="project" value="UniProtKB-EC"/>
</dbReference>
<dbReference type="GO" id="GO:0009853">
    <property type="term" value="P:photorespiration"/>
    <property type="evidence" value="ECO:0007669"/>
    <property type="project" value="UniProtKB-KW"/>
</dbReference>
<dbReference type="GO" id="GO:0019253">
    <property type="term" value="P:reductive pentose-phosphate cycle"/>
    <property type="evidence" value="ECO:0007669"/>
    <property type="project" value="UniProtKB-KW"/>
</dbReference>
<dbReference type="FunFam" id="3.20.20.110:FF:000003">
    <property type="entry name" value="Ribulose bisphosphate carboxylase large chain"/>
    <property type="match status" value="1"/>
</dbReference>
<dbReference type="FunFam" id="3.30.70.150:FF:000001">
    <property type="entry name" value="Ribulose bisphosphate carboxylase large chain"/>
    <property type="match status" value="1"/>
</dbReference>
<dbReference type="Gene3D" id="3.20.20.110">
    <property type="entry name" value="Ribulose bisphosphate carboxylase, large subunit, C-terminal domain"/>
    <property type="match status" value="1"/>
</dbReference>
<dbReference type="Gene3D" id="3.30.70.150">
    <property type="entry name" value="RuBisCO large subunit, N-terminal domain"/>
    <property type="match status" value="1"/>
</dbReference>
<dbReference type="InterPro" id="IPR033966">
    <property type="entry name" value="RuBisCO"/>
</dbReference>
<dbReference type="InterPro" id="IPR020878">
    <property type="entry name" value="RuBisCo_large_chain_AS"/>
</dbReference>
<dbReference type="InterPro" id="IPR000685">
    <property type="entry name" value="RuBisCO_lsu_C"/>
</dbReference>
<dbReference type="InterPro" id="IPR036376">
    <property type="entry name" value="RuBisCO_lsu_C_sf"/>
</dbReference>
<dbReference type="InterPro" id="IPR017443">
    <property type="entry name" value="RuBisCO_lsu_fd_N"/>
</dbReference>
<dbReference type="InterPro" id="IPR036422">
    <property type="entry name" value="RuBisCO_lsu_N_sf"/>
</dbReference>
<dbReference type="NCBIfam" id="NF003252">
    <property type="entry name" value="PRK04208.1"/>
    <property type="match status" value="1"/>
</dbReference>
<dbReference type="PANTHER" id="PTHR42704">
    <property type="entry name" value="RIBULOSE BISPHOSPHATE CARBOXYLASE"/>
    <property type="match status" value="1"/>
</dbReference>
<dbReference type="PANTHER" id="PTHR42704:SF16">
    <property type="entry name" value="RIBULOSE BISPHOSPHATE CARBOXYLASE LARGE CHAIN"/>
    <property type="match status" value="1"/>
</dbReference>
<dbReference type="Pfam" id="PF00016">
    <property type="entry name" value="RuBisCO_large"/>
    <property type="match status" value="1"/>
</dbReference>
<dbReference type="Pfam" id="PF02788">
    <property type="entry name" value="RuBisCO_large_N"/>
    <property type="match status" value="1"/>
</dbReference>
<dbReference type="SFLD" id="SFLDS00014">
    <property type="entry name" value="RuBisCO"/>
    <property type="match status" value="1"/>
</dbReference>
<dbReference type="SFLD" id="SFLDG00301">
    <property type="entry name" value="RuBisCO-like_proteins"/>
    <property type="match status" value="1"/>
</dbReference>
<dbReference type="SUPFAM" id="SSF51649">
    <property type="entry name" value="RuBisCo, C-terminal domain"/>
    <property type="match status" value="1"/>
</dbReference>
<dbReference type="SUPFAM" id="SSF54966">
    <property type="entry name" value="RuBisCO, large subunit, small (N-terminal) domain"/>
    <property type="match status" value="1"/>
</dbReference>
<dbReference type="PROSITE" id="PS00157">
    <property type="entry name" value="RUBISCO_LARGE"/>
    <property type="match status" value="1"/>
</dbReference>
<gene>
    <name type="primary">rbcL</name>
</gene>
<organism>
    <name type="scientific">Nelumbo lutea</name>
    <name type="common">American lotus</name>
    <name type="synonym">Nelumbo nucifera subsp. lutea</name>
    <dbReference type="NCBI Taxonomy" id="4431"/>
    <lineage>
        <taxon>Eukaryota</taxon>
        <taxon>Viridiplantae</taxon>
        <taxon>Streptophyta</taxon>
        <taxon>Embryophyta</taxon>
        <taxon>Tracheophyta</taxon>
        <taxon>Spermatophyta</taxon>
        <taxon>Magnoliopsida</taxon>
        <taxon>Proteales</taxon>
        <taxon>Nelumbonaceae</taxon>
        <taxon>Nelumbo</taxon>
    </lineage>
</organism>
<geneLocation type="chloroplast"/>
<keyword id="KW-0113">Calvin cycle</keyword>
<keyword id="KW-0120">Carbon dioxide fixation</keyword>
<keyword id="KW-0150">Chloroplast</keyword>
<keyword id="KW-1015">Disulfide bond</keyword>
<keyword id="KW-0456">Lyase</keyword>
<keyword id="KW-0460">Magnesium</keyword>
<keyword id="KW-0479">Metal-binding</keyword>
<keyword id="KW-0488">Methylation</keyword>
<keyword id="KW-0503">Monooxygenase</keyword>
<keyword id="KW-0560">Oxidoreductase</keyword>
<keyword id="KW-0601">Photorespiration</keyword>
<keyword id="KW-0602">Photosynthesis</keyword>
<keyword id="KW-0934">Plastid</keyword>
<reference key="1">
    <citation type="journal article" date="1991" name="Proc. Natl. Acad. Sci. U.S.A.">
        <title>Molecular evolutionary history of ancient aquatic angiosperms.</title>
        <authorList>
            <person name="Les D.H."/>
            <person name="Garvin D.K."/>
            <person name="Wimpee C.F."/>
        </authorList>
    </citation>
    <scope>NUCLEOTIDE SEQUENCE [GENOMIC DNA]</scope>
</reference>
<comment type="function">
    <text evidence="1">RuBisCO catalyzes two reactions: the carboxylation of D-ribulose 1,5-bisphosphate, the primary event in carbon dioxide fixation, as well as the oxidative fragmentation of the pentose substrate in the photorespiration process. Both reactions occur simultaneously and in competition at the same active site (By similarity).</text>
</comment>
<comment type="catalytic activity">
    <reaction>
        <text>2 (2R)-3-phosphoglycerate + 2 H(+) = D-ribulose 1,5-bisphosphate + CO2 + H2O</text>
        <dbReference type="Rhea" id="RHEA:23124"/>
        <dbReference type="ChEBI" id="CHEBI:15377"/>
        <dbReference type="ChEBI" id="CHEBI:15378"/>
        <dbReference type="ChEBI" id="CHEBI:16526"/>
        <dbReference type="ChEBI" id="CHEBI:57870"/>
        <dbReference type="ChEBI" id="CHEBI:58272"/>
        <dbReference type="EC" id="4.1.1.39"/>
    </reaction>
</comment>
<comment type="catalytic activity">
    <reaction>
        <text>D-ribulose 1,5-bisphosphate + O2 = 2-phosphoglycolate + (2R)-3-phosphoglycerate + 2 H(+)</text>
        <dbReference type="Rhea" id="RHEA:36631"/>
        <dbReference type="ChEBI" id="CHEBI:15378"/>
        <dbReference type="ChEBI" id="CHEBI:15379"/>
        <dbReference type="ChEBI" id="CHEBI:57870"/>
        <dbReference type="ChEBI" id="CHEBI:58033"/>
        <dbReference type="ChEBI" id="CHEBI:58272"/>
    </reaction>
</comment>
<comment type="cofactor">
    <cofactor evidence="1">
        <name>Mg(2+)</name>
        <dbReference type="ChEBI" id="CHEBI:18420"/>
    </cofactor>
    <text evidence="1">Binds 1 Mg(2+) ion per subunit.</text>
</comment>
<comment type="subunit">
    <text evidence="1">Heterohexadecamer of 8 large chains and 8 small chains; disulfide-linked. The disulfide link is formed within the large subunit homodimers (By similarity).</text>
</comment>
<comment type="subcellular location">
    <subcellularLocation>
        <location>Plastid</location>
        <location>Chloroplast</location>
    </subcellularLocation>
</comment>
<comment type="PTM">
    <text evidence="1">The disulfide bond which can form in the large chain dimeric partners within the hexadecamer appears to be associated with oxidative stress and protein turnover.</text>
</comment>
<comment type="miscellaneous">
    <text evidence="1">The basic functional RuBisCO is composed of a large chain homodimer in a 'head-to-tail' conformation. In form I RuBisCO this homodimer is arranged in a barrel-like tetramer with the small subunits forming a tetrameric 'cap' on each end of the 'barrel' (By similarity).</text>
</comment>
<comment type="similarity">
    <text evidence="3">Belongs to the RuBisCO large chain family. Type I subfamily.</text>
</comment>
<name>RBL_NELLU</name>
<protein>
    <recommendedName>
        <fullName>Ribulose bisphosphate carboxylase large chain</fullName>
        <shortName>RuBisCO large subunit</shortName>
        <ecNumber>4.1.1.39</ecNumber>
    </recommendedName>
</protein>
<proteinExistence type="inferred from homology"/>
<accession>Q05800</accession>
<evidence type="ECO:0000250" key="1"/>
<evidence type="ECO:0000255" key="2">
    <source>
        <dbReference type="PROSITE-ProRule" id="PRU10114"/>
    </source>
</evidence>
<evidence type="ECO:0000305" key="3"/>
<sequence length="394" mass="43917">SVGFKAGVKDYRLTYYTPEYETKDTDILAAFRVTPQPGVPPEEAGAAVAAESSTGTWTTVWTDGLTSLDRYKGRCYHIEPVAGEENQFIAYVAYPLDLFEEGSVTNMFTSIVGNVFGFKALRALRLEDLRIPPAYSKTFQGPPHGIQVERDKLNKYGRPLLGCTIKPKLGLSAKNYGRAVYECLRGGLDFTKDDENVNSQPFMRWRDRFLFCAEAIYKAQAETGEIKGHYLNATAGTCEEMIKRAVFARELGVPIVMHDYLTGGFTANTSLAHYCRDNGLLLHIHRAMHAVIDRQKNHGIHFRVLAKALRMSGGDHIHSGTVVGKLEGEREITLGFVDLLRDDFIEKDRSRGIYFTQDWVSLPGVLPVASGGIHVWHMPALTEIFGDDSVLQFG</sequence>
<feature type="chain" id="PRO_0000062538" description="Ribulose bisphosphate carboxylase large chain">
    <location>
        <begin position="1" status="less than"/>
        <end position="394" status="greater than"/>
    </location>
</feature>
<feature type="active site" description="Proton acceptor" evidence="1">
    <location>
        <position position="166"/>
    </location>
</feature>
<feature type="active site" description="Proton acceptor" evidence="1">
    <location>
        <position position="285"/>
    </location>
</feature>
<feature type="binding site" description="in homodimeric partner" evidence="1">
    <location>
        <position position="114"/>
    </location>
    <ligand>
        <name>substrate</name>
    </ligand>
</feature>
<feature type="binding site" evidence="1">
    <location>
        <position position="164"/>
    </location>
    <ligand>
        <name>substrate</name>
    </ligand>
</feature>
<feature type="binding site" evidence="1">
    <location>
        <position position="168"/>
    </location>
    <ligand>
        <name>substrate</name>
    </ligand>
</feature>
<feature type="binding site" description="via carbamate group" evidence="2">
    <location>
        <position position="192"/>
    </location>
    <ligand>
        <name>Mg(2+)</name>
        <dbReference type="ChEBI" id="CHEBI:18420"/>
    </ligand>
</feature>
<feature type="binding site" evidence="2">
    <location>
        <position position="194"/>
    </location>
    <ligand>
        <name>Mg(2+)</name>
        <dbReference type="ChEBI" id="CHEBI:18420"/>
    </ligand>
</feature>
<feature type="binding site" evidence="2">
    <location>
        <position position="195"/>
    </location>
    <ligand>
        <name>Mg(2+)</name>
        <dbReference type="ChEBI" id="CHEBI:18420"/>
    </ligand>
</feature>
<feature type="binding site" evidence="1">
    <location>
        <position position="286"/>
    </location>
    <ligand>
        <name>substrate</name>
    </ligand>
</feature>
<feature type="binding site" evidence="1">
    <location>
        <position position="318"/>
    </location>
    <ligand>
        <name>substrate</name>
    </ligand>
</feature>
<feature type="binding site" evidence="1">
    <location>
        <position position="370"/>
    </location>
    <ligand>
        <name>substrate</name>
    </ligand>
</feature>
<feature type="site" description="Transition state stabilizer" evidence="1">
    <location>
        <position position="325"/>
    </location>
</feature>
<feature type="modified residue" description="N6,N6,N6-trimethyllysine" evidence="1">
    <location>
        <position position="5"/>
    </location>
</feature>
<feature type="modified residue" description="N6-carboxylysine" evidence="2">
    <location>
        <position position="192"/>
    </location>
</feature>
<feature type="disulfide bond" description="Interchain; in linked form" evidence="1">
    <location>
        <position position="238"/>
    </location>
</feature>
<feature type="non-terminal residue">
    <location>
        <position position="1"/>
    </location>
</feature>
<feature type="non-terminal residue">
    <location>
        <position position="394"/>
    </location>
</feature>